<protein>
    <recommendedName>
        <fullName evidence="1">tRNA uridine 5-carboxymethylaminomethyl modification enzyme MnmG</fullName>
    </recommendedName>
    <alternativeName>
        <fullName evidence="1">Glucose-inhibited division protein A</fullName>
    </alternativeName>
</protein>
<comment type="function">
    <text evidence="1">NAD-binding protein involved in the addition of a carboxymethylaminomethyl (cmnm) group at the wobble position (U34) of certain tRNAs, forming tRNA-cmnm(5)s(2)U34.</text>
</comment>
<comment type="cofactor">
    <cofactor evidence="1">
        <name>FAD</name>
        <dbReference type="ChEBI" id="CHEBI:57692"/>
    </cofactor>
</comment>
<comment type="subunit">
    <text evidence="1">Homodimer. Heterotetramer of two MnmE and two MnmG subunits.</text>
</comment>
<comment type="subcellular location">
    <subcellularLocation>
        <location evidence="1">Cytoplasm</location>
    </subcellularLocation>
</comment>
<comment type="similarity">
    <text evidence="1">Belongs to the MnmG family.</text>
</comment>
<sequence length="619" mass="65872">MHSSATFDVIVVGGGHAGTEAAAAAARLGARVALVSFDPTLIGTMSCNPAIGGLGKGHLMREVDALDGWMARAADAAAIHYRMLNASKGAAVQGPRIQADRKLYRAAIQTLLAAEEGITVVAGEAAALRLSNGGRIAGLDLADGTALTARAVVLATGTFLGGRLFRGEERMEGGRIGEAGSHRLAGQLRAAHLPMARLKTGTPPRLDGRTIDWARLQEQPSDGGRWTCSTWNNARTVPQIFCAITRTNAESHRIIAENLHRSPLFTGAIGAAGPRYCPSIEDKIHRFADRDGHQVFLEPEGLDTHLVYPNGISTSLPADVQLAMLRTIEGLEAVEMVVPGYAVEYDHIDPRALDRTLQVRAMPGVWCAGQINGTTGYEEAAAQGLVAGANAALAVQGREPLILDRSESYIGVMVDDLVLQGVTEPYRMLTARAEYRLRLRADNAATRLTPKGIALGLVRPATAALFARRMAERARAGALLEAPVATADYGAIGLPLPGDGIARRRIDLLRFPGATVERLTILVPEIESIDRAILSEVVEDAHYAPYIARHEAELRALAANEAILLDPALDYAAIGGLSREMVERLSKARPETLGQAARIDGVTPAALTAIMVHSRRRAA</sequence>
<dbReference type="EMBL" id="CP000356">
    <property type="protein sequence ID" value="ABF54559.1"/>
    <property type="molecule type" value="Genomic_DNA"/>
</dbReference>
<dbReference type="RefSeq" id="WP_011543123.1">
    <property type="nucleotide sequence ID" value="NC_008048.1"/>
</dbReference>
<dbReference type="SMR" id="Q1GP63"/>
<dbReference type="STRING" id="317655.Sala_2854"/>
<dbReference type="KEGG" id="sal:Sala_2854"/>
<dbReference type="eggNOG" id="COG0445">
    <property type="taxonomic scope" value="Bacteria"/>
</dbReference>
<dbReference type="HOGENOM" id="CLU_007831_2_2_5"/>
<dbReference type="OrthoDB" id="9815560at2"/>
<dbReference type="Proteomes" id="UP000006578">
    <property type="component" value="Chromosome"/>
</dbReference>
<dbReference type="GO" id="GO:0005829">
    <property type="term" value="C:cytosol"/>
    <property type="evidence" value="ECO:0007669"/>
    <property type="project" value="TreeGrafter"/>
</dbReference>
<dbReference type="GO" id="GO:0050660">
    <property type="term" value="F:flavin adenine dinucleotide binding"/>
    <property type="evidence" value="ECO:0007669"/>
    <property type="project" value="UniProtKB-UniRule"/>
</dbReference>
<dbReference type="GO" id="GO:0030488">
    <property type="term" value="P:tRNA methylation"/>
    <property type="evidence" value="ECO:0007669"/>
    <property type="project" value="TreeGrafter"/>
</dbReference>
<dbReference type="GO" id="GO:0002098">
    <property type="term" value="P:tRNA wobble uridine modification"/>
    <property type="evidence" value="ECO:0007669"/>
    <property type="project" value="InterPro"/>
</dbReference>
<dbReference type="FunFam" id="1.10.150.570:FF:000001">
    <property type="entry name" value="tRNA uridine 5-carboxymethylaminomethyl modification enzyme MnmG"/>
    <property type="match status" value="1"/>
</dbReference>
<dbReference type="FunFam" id="3.50.50.60:FF:000002">
    <property type="entry name" value="tRNA uridine 5-carboxymethylaminomethyl modification enzyme MnmG"/>
    <property type="match status" value="1"/>
</dbReference>
<dbReference type="Gene3D" id="3.50.50.60">
    <property type="entry name" value="FAD/NAD(P)-binding domain"/>
    <property type="match status" value="2"/>
</dbReference>
<dbReference type="Gene3D" id="1.10.150.570">
    <property type="entry name" value="GidA associated domain, C-terminal subdomain"/>
    <property type="match status" value="1"/>
</dbReference>
<dbReference type="HAMAP" id="MF_00129">
    <property type="entry name" value="MnmG_GidA"/>
    <property type="match status" value="1"/>
</dbReference>
<dbReference type="InterPro" id="IPR036188">
    <property type="entry name" value="FAD/NAD-bd_sf"/>
</dbReference>
<dbReference type="InterPro" id="IPR049312">
    <property type="entry name" value="GIDA_C_N"/>
</dbReference>
<dbReference type="InterPro" id="IPR004416">
    <property type="entry name" value="MnmG"/>
</dbReference>
<dbReference type="InterPro" id="IPR002218">
    <property type="entry name" value="MnmG-rel"/>
</dbReference>
<dbReference type="InterPro" id="IPR020595">
    <property type="entry name" value="MnmG-rel_CS"/>
</dbReference>
<dbReference type="InterPro" id="IPR026904">
    <property type="entry name" value="MnmG_C"/>
</dbReference>
<dbReference type="InterPro" id="IPR047001">
    <property type="entry name" value="MnmG_C_subdom"/>
</dbReference>
<dbReference type="InterPro" id="IPR044920">
    <property type="entry name" value="MnmG_C_subdom_sf"/>
</dbReference>
<dbReference type="InterPro" id="IPR040131">
    <property type="entry name" value="MnmG_N"/>
</dbReference>
<dbReference type="NCBIfam" id="TIGR00136">
    <property type="entry name" value="mnmG_gidA"/>
    <property type="match status" value="1"/>
</dbReference>
<dbReference type="PANTHER" id="PTHR11806">
    <property type="entry name" value="GLUCOSE INHIBITED DIVISION PROTEIN A"/>
    <property type="match status" value="1"/>
</dbReference>
<dbReference type="PANTHER" id="PTHR11806:SF0">
    <property type="entry name" value="PROTEIN MTO1 HOMOLOG, MITOCHONDRIAL"/>
    <property type="match status" value="1"/>
</dbReference>
<dbReference type="Pfam" id="PF01134">
    <property type="entry name" value="GIDA"/>
    <property type="match status" value="1"/>
</dbReference>
<dbReference type="Pfam" id="PF21680">
    <property type="entry name" value="GIDA_C_1st"/>
    <property type="match status" value="1"/>
</dbReference>
<dbReference type="Pfam" id="PF13932">
    <property type="entry name" value="SAM_GIDA_C"/>
    <property type="match status" value="1"/>
</dbReference>
<dbReference type="PRINTS" id="PR00411">
    <property type="entry name" value="PNDRDTASEI"/>
</dbReference>
<dbReference type="SMART" id="SM01228">
    <property type="entry name" value="GIDA_assoc_3"/>
    <property type="match status" value="1"/>
</dbReference>
<dbReference type="SUPFAM" id="SSF51905">
    <property type="entry name" value="FAD/NAD(P)-binding domain"/>
    <property type="match status" value="1"/>
</dbReference>
<dbReference type="PROSITE" id="PS01280">
    <property type="entry name" value="GIDA_1"/>
    <property type="match status" value="1"/>
</dbReference>
<dbReference type="PROSITE" id="PS01281">
    <property type="entry name" value="GIDA_2"/>
    <property type="match status" value="1"/>
</dbReference>
<proteinExistence type="inferred from homology"/>
<feature type="chain" id="PRO_0000345337" description="tRNA uridine 5-carboxymethylaminomethyl modification enzyme MnmG">
    <location>
        <begin position="1"/>
        <end position="619"/>
    </location>
</feature>
<feature type="binding site" evidence="1">
    <location>
        <begin position="13"/>
        <end position="18"/>
    </location>
    <ligand>
        <name>FAD</name>
        <dbReference type="ChEBI" id="CHEBI:57692"/>
    </ligand>
</feature>
<feature type="binding site" evidence="1">
    <location>
        <begin position="273"/>
        <end position="287"/>
    </location>
    <ligand>
        <name>NAD(+)</name>
        <dbReference type="ChEBI" id="CHEBI:57540"/>
    </ligand>
</feature>
<name>MNMG_SPHAL</name>
<evidence type="ECO:0000255" key="1">
    <source>
        <dbReference type="HAMAP-Rule" id="MF_00129"/>
    </source>
</evidence>
<accession>Q1GP63</accession>
<keyword id="KW-0963">Cytoplasm</keyword>
<keyword id="KW-0274">FAD</keyword>
<keyword id="KW-0285">Flavoprotein</keyword>
<keyword id="KW-0520">NAD</keyword>
<keyword id="KW-1185">Reference proteome</keyword>
<keyword id="KW-0819">tRNA processing</keyword>
<reference key="1">
    <citation type="journal article" date="2009" name="Proc. Natl. Acad. Sci. U.S.A.">
        <title>The genomic basis of trophic strategy in marine bacteria.</title>
        <authorList>
            <person name="Lauro F.M."/>
            <person name="McDougald D."/>
            <person name="Thomas T."/>
            <person name="Williams T.J."/>
            <person name="Egan S."/>
            <person name="Rice S."/>
            <person name="DeMaere M.Z."/>
            <person name="Ting L."/>
            <person name="Ertan H."/>
            <person name="Johnson J."/>
            <person name="Ferriera S."/>
            <person name="Lapidus A."/>
            <person name="Anderson I."/>
            <person name="Kyrpides N."/>
            <person name="Munk A.C."/>
            <person name="Detter C."/>
            <person name="Han C.S."/>
            <person name="Brown M.V."/>
            <person name="Robb F.T."/>
            <person name="Kjelleberg S."/>
            <person name="Cavicchioli R."/>
        </authorList>
    </citation>
    <scope>NUCLEOTIDE SEQUENCE [LARGE SCALE GENOMIC DNA]</scope>
    <source>
        <strain>DSM 13593 / LMG 18877 / RB2256</strain>
    </source>
</reference>
<gene>
    <name evidence="1" type="primary">mnmG</name>
    <name evidence="1" type="synonym">gidA</name>
    <name type="ordered locus">Sala_2854</name>
</gene>
<organism>
    <name type="scientific">Sphingopyxis alaskensis (strain DSM 13593 / LMG 18877 / RB2256)</name>
    <name type="common">Sphingomonas alaskensis</name>
    <dbReference type="NCBI Taxonomy" id="317655"/>
    <lineage>
        <taxon>Bacteria</taxon>
        <taxon>Pseudomonadati</taxon>
        <taxon>Pseudomonadota</taxon>
        <taxon>Alphaproteobacteria</taxon>
        <taxon>Sphingomonadales</taxon>
        <taxon>Sphingomonadaceae</taxon>
        <taxon>Sphingopyxis</taxon>
    </lineage>
</organism>